<name>Y2671_BORPD</name>
<proteinExistence type="inferred from homology"/>
<reference key="1">
    <citation type="journal article" date="2008" name="BMC Genomics">
        <title>The missing link: Bordetella petrii is endowed with both the metabolic versatility of environmental bacteria and virulence traits of pathogenic Bordetellae.</title>
        <authorList>
            <person name="Gross R."/>
            <person name="Guzman C.A."/>
            <person name="Sebaihia M."/>
            <person name="Martin dos Santos V.A.P."/>
            <person name="Pieper D.H."/>
            <person name="Koebnik R."/>
            <person name="Lechner M."/>
            <person name="Bartels D."/>
            <person name="Buhrmester J."/>
            <person name="Choudhuri J.V."/>
            <person name="Ebensen T."/>
            <person name="Gaigalat L."/>
            <person name="Herrmann S."/>
            <person name="Khachane A.N."/>
            <person name="Larisch C."/>
            <person name="Link S."/>
            <person name="Linke B."/>
            <person name="Meyer F."/>
            <person name="Mormann S."/>
            <person name="Nakunst D."/>
            <person name="Rueckert C."/>
            <person name="Schneiker-Bekel S."/>
            <person name="Schulze K."/>
            <person name="Voerholter F.-J."/>
            <person name="Yevsa T."/>
            <person name="Engle J.T."/>
            <person name="Goldman W.E."/>
            <person name="Puehler A."/>
            <person name="Goebel U.B."/>
            <person name="Goesmann A."/>
            <person name="Bloecker H."/>
            <person name="Kaiser O."/>
            <person name="Martinez-Arias R."/>
        </authorList>
    </citation>
    <scope>NUCLEOTIDE SEQUENCE [LARGE SCALE GENOMIC DNA]</scope>
    <source>
        <strain>ATCC BAA-461 / DSM 12804 / CCUG 43448</strain>
    </source>
</reference>
<dbReference type="EMBL" id="AM902716">
    <property type="protein sequence ID" value="CAP43013.1"/>
    <property type="molecule type" value="Genomic_DNA"/>
</dbReference>
<dbReference type="SMR" id="A9IQ32"/>
<dbReference type="STRING" id="94624.Bpet2671"/>
<dbReference type="KEGG" id="bpt:Bpet2671"/>
<dbReference type="eggNOG" id="COG2835">
    <property type="taxonomic scope" value="Bacteria"/>
</dbReference>
<dbReference type="Proteomes" id="UP000001225">
    <property type="component" value="Chromosome"/>
</dbReference>
<dbReference type="GO" id="GO:0005829">
    <property type="term" value="C:cytosol"/>
    <property type="evidence" value="ECO:0007669"/>
    <property type="project" value="TreeGrafter"/>
</dbReference>
<dbReference type="FunFam" id="2.20.25.10:FF:000002">
    <property type="entry name" value="UPF0434 protein YcaR"/>
    <property type="match status" value="1"/>
</dbReference>
<dbReference type="Gene3D" id="2.20.25.10">
    <property type="match status" value="1"/>
</dbReference>
<dbReference type="HAMAP" id="MF_01187">
    <property type="entry name" value="UPF0434"/>
    <property type="match status" value="1"/>
</dbReference>
<dbReference type="InterPro" id="IPR005651">
    <property type="entry name" value="Trm112-like"/>
</dbReference>
<dbReference type="PANTHER" id="PTHR33505:SF4">
    <property type="entry name" value="PROTEIN PREY, MITOCHONDRIAL"/>
    <property type="match status" value="1"/>
</dbReference>
<dbReference type="PANTHER" id="PTHR33505">
    <property type="entry name" value="ZGC:162634"/>
    <property type="match status" value="1"/>
</dbReference>
<dbReference type="Pfam" id="PF03966">
    <property type="entry name" value="Trm112p"/>
    <property type="match status" value="1"/>
</dbReference>
<dbReference type="SUPFAM" id="SSF158997">
    <property type="entry name" value="Trm112p-like"/>
    <property type="match status" value="1"/>
</dbReference>
<gene>
    <name type="ordered locus">Bpet2671</name>
</gene>
<protein>
    <recommendedName>
        <fullName evidence="1">UPF0434 protein Bpet2671</fullName>
    </recommendedName>
</protein>
<comment type="similarity">
    <text evidence="1">Belongs to the UPF0434 family.</text>
</comment>
<organism>
    <name type="scientific">Bordetella petrii (strain ATCC BAA-461 / DSM 12804 / CCUG 43448)</name>
    <dbReference type="NCBI Taxonomy" id="340100"/>
    <lineage>
        <taxon>Bacteria</taxon>
        <taxon>Pseudomonadati</taxon>
        <taxon>Pseudomonadota</taxon>
        <taxon>Betaproteobacteria</taxon>
        <taxon>Burkholderiales</taxon>
        <taxon>Alcaligenaceae</taxon>
        <taxon>Bordetella</taxon>
    </lineage>
</organism>
<feature type="chain" id="PRO_1000138287" description="UPF0434 protein Bpet2671">
    <location>
        <begin position="1"/>
        <end position="61"/>
    </location>
</feature>
<sequence>MESRLLDTLVCPVCKGRLDFDRARAELLCRADRLAYPVRDGIPVMLESEARQLDAAPADTA</sequence>
<accession>A9IQ32</accession>
<evidence type="ECO:0000255" key="1">
    <source>
        <dbReference type="HAMAP-Rule" id="MF_01187"/>
    </source>
</evidence>